<organism>
    <name type="scientific">Chlorobaculum tepidum (strain ATCC 49652 / DSM 12025 / NBRC 103806 / TLS)</name>
    <name type="common">Chlorobium tepidum</name>
    <dbReference type="NCBI Taxonomy" id="194439"/>
    <lineage>
        <taxon>Bacteria</taxon>
        <taxon>Pseudomonadati</taxon>
        <taxon>Chlorobiota</taxon>
        <taxon>Chlorobiia</taxon>
        <taxon>Chlorobiales</taxon>
        <taxon>Chlorobiaceae</taxon>
        <taxon>Chlorobaculum</taxon>
    </lineage>
</organism>
<reference key="1">
    <citation type="journal article" date="2002" name="Proc. Natl. Acad. Sci. U.S.A.">
        <title>The complete genome sequence of Chlorobium tepidum TLS, a photosynthetic, anaerobic, green-sulfur bacterium.</title>
        <authorList>
            <person name="Eisen J.A."/>
            <person name="Nelson K.E."/>
            <person name="Paulsen I.T."/>
            <person name="Heidelberg J.F."/>
            <person name="Wu M."/>
            <person name="Dodson R.J."/>
            <person name="DeBoy R.T."/>
            <person name="Gwinn M.L."/>
            <person name="Nelson W.C."/>
            <person name="Haft D.H."/>
            <person name="Hickey E.K."/>
            <person name="Peterson J.D."/>
            <person name="Durkin A.S."/>
            <person name="Kolonay J.F."/>
            <person name="Yang F."/>
            <person name="Holt I.E."/>
            <person name="Umayam L.A."/>
            <person name="Mason T.M."/>
            <person name="Brenner M."/>
            <person name="Shea T.P."/>
            <person name="Parksey D.S."/>
            <person name="Nierman W.C."/>
            <person name="Feldblyum T.V."/>
            <person name="Hansen C.L."/>
            <person name="Craven M.B."/>
            <person name="Radune D."/>
            <person name="Vamathevan J.J."/>
            <person name="Khouri H.M."/>
            <person name="White O."/>
            <person name="Gruber T.M."/>
            <person name="Ketchum K.A."/>
            <person name="Venter J.C."/>
            <person name="Tettelin H."/>
            <person name="Bryant D.A."/>
            <person name="Fraser C.M."/>
        </authorList>
    </citation>
    <scope>NUCLEOTIDE SEQUENCE [LARGE SCALE GENOMIC DNA]</scope>
    <source>
        <strain>ATCC 49652 / DSM 12025 / NBRC 103806 / TLS</strain>
    </source>
</reference>
<gene>
    <name evidence="1" type="primary">xseA</name>
    <name type="ordered locus">CT1828</name>
</gene>
<feature type="chain" id="PRO_0000197837" description="Exodeoxyribonuclease 7 large subunit">
    <location>
        <begin position="1"/>
        <end position="398"/>
    </location>
</feature>
<proteinExistence type="inferred from homology"/>
<sequence length="398" mass="44260">MIKTAQSVGELTRAIKNELESLFPFVRVKGELSNVKQHSSGHVYLTLKDSEAQIPAVIWKSVRARSPLELRDGLEVIAEGRLEVWPPAGRYQLICTALFETGEGEQRLALERLIAKLAKAGWFDAERKKPIPRIPRRIGMITSPTGAVIRDMSDVFARRFPAAELLLYPVQVQGERAVESIVRALRYFNDPPKPEHKPDVLIVARGGGSSEDLQAFNDEAVAEAIYRSAIPVISAVGHETDLSVADMVADLRAGTPSIAAERAVPDREELLRLIDNLVNRQSILMEGLISGAQLQVDSITSSYAFNRPVQMLGQFEERLALMEKEMKRAIAEKVRDREQQLTAAADRLAMLDINRTLKRGFALVTQDDRYVTSAKSLEADAKIGLTFHDGQREARVTE</sequence>
<comment type="function">
    <text evidence="1">Bidirectionally degrades single-stranded DNA into large acid-insoluble oligonucleotides, which are then degraded further into small acid-soluble oligonucleotides.</text>
</comment>
<comment type="catalytic activity">
    <reaction evidence="1">
        <text>Exonucleolytic cleavage in either 5'- to 3'- or 3'- to 5'-direction to yield nucleoside 5'-phosphates.</text>
        <dbReference type="EC" id="3.1.11.6"/>
    </reaction>
</comment>
<comment type="subunit">
    <text evidence="1">Heterooligomer composed of large and small subunits.</text>
</comment>
<comment type="subcellular location">
    <subcellularLocation>
        <location evidence="1">Cytoplasm</location>
    </subcellularLocation>
</comment>
<comment type="similarity">
    <text evidence="1">Belongs to the XseA family.</text>
</comment>
<accession>Q8KBF9</accession>
<evidence type="ECO:0000255" key="1">
    <source>
        <dbReference type="HAMAP-Rule" id="MF_00378"/>
    </source>
</evidence>
<protein>
    <recommendedName>
        <fullName evidence="1">Exodeoxyribonuclease 7 large subunit</fullName>
        <ecNumber evidence="1">3.1.11.6</ecNumber>
    </recommendedName>
    <alternativeName>
        <fullName evidence="1">Exodeoxyribonuclease VII large subunit</fullName>
        <shortName evidence="1">Exonuclease VII large subunit</shortName>
    </alternativeName>
</protein>
<keyword id="KW-0963">Cytoplasm</keyword>
<keyword id="KW-0269">Exonuclease</keyword>
<keyword id="KW-0378">Hydrolase</keyword>
<keyword id="KW-0540">Nuclease</keyword>
<keyword id="KW-1185">Reference proteome</keyword>
<name>EX7L_CHLTE</name>
<dbReference type="EC" id="3.1.11.6" evidence="1"/>
<dbReference type="EMBL" id="AE006470">
    <property type="protein sequence ID" value="AAM73049.1"/>
    <property type="molecule type" value="Genomic_DNA"/>
</dbReference>
<dbReference type="RefSeq" id="NP_662707.1">
    <property type="nucleotide sequence ID" value="NC_002932.3"/>
</dbReference>
<dbReference type="RefSeq" id="WP_010933488.1">
    <property type="nucleotide sequence ID" value="NC_002932.3"/>
</dbReference>
<dbReference type="SMR" id="Q8KBF9"/>
<dbReference type="STRING" id="194439.CT1828"/>
<dbReference type="EnsemblBacteria" id="AAM73049">
    <property type="protein sequence ID" value="AAM73049"/>
    <property type="gene ID" value="CT1828"/>
</dbReference>
<dbReference type="KEGG" id="cte:CT1828"/>
<dbReference type="PATRIC" id="fig|194439.7.peg.1660"/>
<dbReference type="eggNOG" id="COG1570">
    <property type="taxonomic scope" value="Bacteria"/>
</dbReference>
<dbReference type="HOGENOM" id="CLU_023625_2_0_10"/>
<dbReference type="OrthoDB" id="9802795at2"/>
<dbReference type="Proteomes" id="UP000001007">
    <property type="component" value="Chromosome"/>
</dbReference>
<dbReference type="GO" id="GO:0005737">
    <property type="term" value="C:cytoplasm"/>
    <property type="evidence" value="ECO:0007669"/>
    <property type="project" value="UniProtKB-SubCell"/>
</dbReference>
<dbReference type="GO" id="GO:0009318">
    <property type="term" value="C:exodeoxyribonuclease VII complex"/>
    <property type="evidence" value="ECO:0007669"/>
    <property type="project" value="InterPro"/>
</dbReference>
<dbReference type="GO" id="GO:0008855">
    <property type="term" value="F:exodeoxyribonuclease VII activity"/>
    <property type="evidence" value="ECO:0007669"/>
    <property type="project" value="UniProtKB-UniRule"/>
</dbReference>
<dbReference type="GO" id="GO:0003676">
    <property type="term" value="F:nucleic acid binding"/>
    <property type="evidence" value="ECO:0007669"/>
    <property type="project" value="InterPro"/>
</dbReference>
<dbReference type="GO" id="GO:0006308">
    <property type="term" value="P:DNA catabolic process"/>
    <property type="evidence" value="ECO:0007669"/>
    <property type="project" value="UniProtKB-UniRule"/>
</dbReference>
<dbReference type="CDD" id="cd04489">
    <property type="entry name" value="ExoVII_LU_OBF"/>
    <property type="match status" value="1"/>
</dbReference>
<dbReference type="HAMAP" id="MF_00378">
    <property type="entry name" value="Exonuc_7_L"/>
    <property type="match status" value="1"/>
</dbReference>
<dbReference type="InterPro" id="IPR003753">
    <property type="entry name" value="Exonuc_VII_L"/>
</dbReference>
<dbReference type="InterPro" id="IPR020579">
    <property type="entry name" value="Exonuc_VII_lsu_C"/>
</dbReference>
<dbReference type="InterPro" id="IPR025824">
    <property type="entry name" value="OB-fold_nuc-bd_dom"/>
</dbReference>
<dbReference type="NCBIfam" id="TIGR00237">
    <property type="entry name" value="xseA"/>
    <property type="match status" value="1"/>
</dbReference>
<dbReference type="PANTHER" id="PTHR30008">
    <property type="entry name" value="EXODEOXYRIBONUCLEASE 7 LARGE SUBUNIT"/>
    <property type="match status" value="1"/>
</dbReference>
<dbReference type="PANTHER" id="PTHR30008:SF0">
    <property type="entry name" value="EXODEOXYRIBONUCLEASE 7 LARGE SUBUNIT"/>
    <property type="match status" value="1"/>
</dbReference>
<dbReference type="Pfam" id="PF02601">
    <property type="entry name" value="Exonuc_VII_L"/>
    <property type="match status" value="2"/>
</dbReference>
<dbReference type="Pfam" id="PF13742">
    <property type="entry name" value="tRNA_anti_2"/>
    <property type="match status" value="1"/>
</dbReference>